<name>RBFA_BACAC</name>
<gene>
    <name evidence="1" type="primary">rbfA</name>
    <name type="ordered locus">BAMEG_0683</name>
</gene>
<evidence type="ECO:0000255" key="1">
    <source>
        <dbReference type="HAMAP-Rule" id="MF_00003"/>
    </source>
</evidence>
<comment type="function">
    <text evidence="1">One of several proteins that assist in the late maturation steps of the functional core of the 30S ribosomal subunit. Associates with free 30S ribosomal subunits (but not with 30S subunits that are part of 70S ribosomes or polysomes). Required for efficient processing of 16S rRNA. May interact with the 5'-terminal helix region of 16S rRNA.</text>
</comment>
<comment type="subunit">
    <text evidence="1">Monomer. Binds 30S ribosomal subunits, but not 50S ribosomal subunits or 70S ribosomes.</text>
</comment>
<comment type="subcellular location">
    <subcellularLocation>
        <location evidence="1">Cytoplasm</location>
    </subcellularLocation>
</comment>
<comment type="similarity">
    <text evidence="1">Belongs to the RbfA family.</text>
</comment>
<protein>
    <recommendedName>
        <fullName evidence="1">Ribosome-binding factor A</fullName>
    </recommendedName>
</protein>
<reference key="1">
    <citation type="submission" date="2008-10" db="EMBL/GenBank/DDBJ databases">
        <title>Genome sequence of Bacillus anthracis str. CDC 684.</title>
        <authorList>
            <person name="Dodson R.J."/>
            <person name="Munk A.C."/>
            <person name="Brettin T."/>
            <person name="Bruce D."/>
            <person name="Detter C."/>
            <person name="Tapia R."/>
            <person name="Han C."/>
            <person name="Sutton G."/>
            <person name="Sims D."/>
        </authorList>
    </citation>
    <scope>NUCLEOTIDE SEQUENCE [LARGE SCALE GENOMIC DNA]</scope>
    <source>
        <strain>CDC 684 / NRRL 3495</strain>
    </source>
</reference>
<proteinExistence type="inferred from homology"/>
<organism>
    <name type="scientific">Bacillus anthracis (strain CDC 684 / NRRL 3495)</name>
    <dbReference type="NCBI Taxonomy" id="568206"/>
    <lineage>
        <taxon>Bacteria</taxon>
        <taxon>Bacillati</taxon>
        <taxon>Bacillota</taxon>
        <taxon>Bacilli</taxon>
        <taxon>Bacillales</taxon>
        <taxon>Bacillaceae</taxon>
        <taxon>Bacillus</taxon>
        <taxon>Bacillus cereus group</taxon>
    </lineage>
</organism>
<keyword id="KW-0963">Cytoplasm</keyword>
<keyword id="KW-0690">Ribosome biogenesis</keyword>
<dbReference type="EMBL" id="CP001215">
    <property type="protein sequence ID" value="ACP16836.1"/>
    <property type="molecule type" value="Genomic_DNA"/>
</dbReference>
<dbReference type="RefSeq" id="WP_000776446.1">
    <property type="nucleotide sequence ID" value="NC_012581.1"/>
</dbReference>
<dbReference type="SMR" id="C3L7B6"/>
<dbReference type="GeneID" id="45023639"/>
<dbReference type="KEGG" id="bah:BAMEG_0683"/>
<dbReference type="HOGENOM" id="CLU_089475_6_3_9"/>
<dbReference type="GO" id="GO:0005829">
    <property type="term" value="C:cytosol"/>
    <property type="evidence" value="ECO:0007669"/>
    <property type="project" value="TreeGrafter"/>
</dbReference>
<dbReference type="GO" id="GO:0043024">
    <property type="term" value="F:ribosomal small subunit binding"/>
    <property type="evidence" value="ECO:0007669"/>
    <property type="project" value="TreeGrafter"/>
</dbReference>
<dbReference type="GO" id="GO:0030490">
    <property type="term" value="P:maturation of SSU-rRNA"/>
    <property type="evidence" value="ECO:0007669"/>
    <property type="project" value="UniProtKB-UniRule"/>
</dbReference>
<dbReference type="FunFam" id="3.30.300.20:FF:000009">
    <property type="entry name" value="Ribosome-binding factor A"/>
    <property type="match status" value="1"/>
</dbReference>
<dbReference type="Gene3D" id="3.30.300.20">
    <property type="match status" value="1"/>
</dbReference>
<dbReference type="HAMAP" id="MF_00003">
    <property type="entry name" value="RbfA"/>
    <property type="match status" value="1"/>
</dbReference>
<dbReference type="InterPro" id="IPR015946">
    <property type="entry name" value="KH_dom-like_a/b"/>
</dbReference>
<dbReference type="InterPro" id="IPR000238">
    <property type="entry name" value="RbfA"/>
</dbReference>
<dbReference type="InterPro" id="IPR023799">
    <property type="entry name" value="RbfA_dom_sf"/>
</dbReference>
<dbReference type="InterPro" id="IPR020053">
    <property type="entry name" value="Ribosome-bd_factorA_CS"/>
</dbReference>
<dbReference type="NCBIfam" id="TIGR00082">
    <property type="entry name" value="rbfA"/>
    <property type="match status" value="1"/>
</dbReference>
<dbReference type="PANTHER" id="PTHR33515">
    <property type="entry name" value="RIBOSOME-BINDING FACTOR A, CHLOROPLASTIC-RELATED"/>
    <property type="match status" value="1"/>
</dbReference>
<dbReference type="PANTHER" id="PTHR33515:SF1">
    <property type="entry name" value="RIBOSOME-BINDING FACTOR A, CHLOROPLASTIC-RELATED"/>
    <property type="match status" value="1"/>
</dbReference>
<dbReference type="Pfam" id="PF02033">
    <property type="entry name" value="RBFA"/>
    <property type="match status" value="1"/>
</dbReference>
<dbReference type="SUPFAM" id="SSF89919">
    <property type="entry name" value="Ribosome-binding factor A, RbfA"/>
    <property type="match status" value="1"/>
</dbReference>
<dbReference type="PROSITE" id="PS01319">
    <property type="entry name" value="RBFA"/>
    <property type="match status" value="1"/>
</dbReference>
<accession>C3L7B6</accession>
<sequence>MKLRANRVGEQMKKELGDIISRKIKDPRVGFVTVTDVQVSRDLQIATVYISVLGDEEQKENTLKGLAKAKGFIRSEIGQRIRLRKTPEISFEFDESIGYGHRIDTLLHEINKEGKREE</sequence>
<feature type="chain" id="PRO_1000193226" description="Ribosome-binding factor A">
    <location>
        <begin position="1"/>
        <end position="118"/>
    </location>
</feature>